<name>FABA_ALIFM</name>
<gene>
    <name evidence="1" type="primary">fabA</name>
    <name type="ordered locus">VFMJ11_1370</name>
</gene>
<sequence>MQNKPSSYDREDLLASSRGELFGPNGPQLPAPNMLMMDRIPLMSETEGAFGKGKVIAELDITPDLWFFDCHFPGDPVMPGCLGLDAMWQLVGFFLGWIGGEGKGRALGVGEVKFTGQVLPTAKKVTYEIDFKRVINRKLVMGLADGRVLVDGKEIYVAKDLKVGLFQDTSAF</sequence>
<feature type="chain" id="PRO_1000201225" description="3-hydroxydecanoyl-[acyl-carrier-protein] dehydratase">
    <location>
        <begin position="1"/>
        <end position="172"/>
    </location>
</feature>
<feature type="active site" evidence="1">
    <location>
        <position position="71"/>
    </location>
</feature>
<proteinExistence type="inferred from homology"/>
<dbReference type="EC" id="4.2.1.59" evidence="1"/>
<dbReference type="EC" id="5.3.3.14" evidence="1"/>
<dbReference type="EMBL" id="CP001139">
    <property type="protein sequence ID" value="ACH65563.1"/>
    <property type="molecule type" value="Genomic_DNA"/>
</dbReference>
<dbReference type="RefSeq" id="WP_005419215.1">
    <property type="nucleotide sequence ID" value="NC_011184.1"/>
</dbReference>
<dbReference type="SMR" id="B5FE24"/>
<dbReference type="GeneID" id="54163964"/>
<dbReference type="KEGG" id="vfm:VFMJ11_1370"/>
<dbReference type="HOGENOM" id="CLU_097925_0_0_6"/>
<dbReference type="UniPathway" id="UPA00094"/>
<dbReference type="Proteomes" id="UP000001857">
    <property type="component" value="Chromosome I"/>
</dbReference>
<dbReference type="GO" id="GO:0005737">
    <property type="term" value="C:cytoplasm"/>
    <property type="evidence" value="ECO:0007669"/>
    <property type="project" value="UniProtKB-SubCell"/>
</dbReference>
<dbReference type="GO" id="GO:0019171">
    <property type="term" value="F:(3R)-hydroxyacyl-[acyl-carrier-protein] dehydratase activity"/>
    <property type="evidence" value="ECO:0007669"/>
    <property type="project" value="UniProtKB-UniRule"/>
</dbReference>
<dbReference type="GO" id="GO:0034017">
    <property type="term" value="F:trans-2-decenoyl-acyl-carrier-protein isomerase activity"/>
    <property type="evidence" value="ECO:0007669"/>
    <property type="project" value="UniProtKB-UniRule"/>
</dbReference>
<dbReference type="GO" id="GO:0006636">
    <property type="term" value="P:unsaturated fatty acid biosynthetic process"/>
    <property type="evidence" value="ECO:0007669"/>
    <property type="project" value="UniProtKB-UniRule"/>
</dbReference>
<dbReference type="CDD" id="cd01287">
    <property type="entry name" value="FabA"/>
    <property type="match status" value="1"/>
</dbReference>
<dbReference type="FunFam" id="3.10.129.10:FF:000003">
    <property type="entry name" value="3-hydroxydecanoyl-[acyl-carrier-protein] dehydratase"/>
    <property type="match status" value="1"/>
</dbReference>
<dbReference type="Gene3D" id="3.10.129.10">
    <property type="entry name" value="Hotdog Thioesterase"/>
    <property type="match status" value="1"/>
</dbReference>
<dbReference type="HAMAP" id="MF_00405">
    <property type="entry name" value="FabA"/>
    <property type="match status" value="1"/>
</dbReference>
<dbReference type="InterPro" id="IPR010083">
    <property type="entry name" value="FabA"/>
</dbReference>
<dbReference type="InterPro" id="IPR013114">
    <property type="entry name" value="FabA_FabZ"/>
</dbReference>
<dbReference type="InterPro" id="IPR029069">
    <property type="entry name" value="HotDog_dom_sf"/>
</dbReference>
<dbReference type="NCBIfam" id="TIGR01749">
    <property type="entry name" value="fabA"/>
    <property type="match status" value="1"/>
</dbReference>
<dbReference type="NCBIfam" id="NF003509">
    <property type="entry name" value="PRK05174.1"/>
    <property type="match status" value="1"/>
</dbReference>
<dbReference type="PANTHER" id="PTHR30272">
    <property type="entry name" value="3-HYDROXYACYL-[ACYL-CARRIER-PROTEIN] DEHYDRATASE"/>
    <property type="match status" value="1"/>
</dbReference>
<dbReference type="PANTHER" id="PTHR30272:SF8">
    <property type="entry name" value="3-HYDROXYDECANOYL-[ACYL-CARRIER-PROTEIN] DEHYDRATASE"/>
    <property type="match status" value="1"/>
</dbReference>
<dbReference type="Pfam" id="PF07977">
    <property type="entry name" value="FabA"/>
    <property type="match status" value="1"/>
</dbReference>
<dbReference type="SUPFAM" id="SSF54637">
    <property type="entry name" value="Thioesterase/thiol ester dehydrase-isomerase"/>
    <property type="match status" value="1"/>
</dbReference>
<reference key="1">
    <citation type="submission" date="2008-08" db="EMBL/GenBank/DDBJ databases">
        <title>Complete sequence of Vibrio fischeri strain MJ11.</title>
        <authorList>
            <person name="Mandel M.J."/>
            <person name="Stabb E.V."/>
            <person name="Ruby E.G."/>
            <person name="Ferriera S."/>
            <person name="Johnson J."/>
            <person name="Kravitz S."/>
            <person name="Beeson K."/>
            <person name="Sutton G."/>
            <person name="Rogers Y.-H."/>
            <person name="Friedman R."/>
            <person name="Frazier M."/>
            <person name="Venter J.C."/>
        </authorList>
    </citation>
    <scope>NUCLEOTIDE SEQUENCE [LARGE SCALE GENOMIC DNA]</scope>
    <source>
        <strain>MJ11</strain>
    </source>
</reference>
<organism>
    <name type="scientific">Aliivibrio fischeri (strain MJ11)</name>
    <name type="common">Vibrio fischeri</name>
    <dbReference type="NCBI Taxonomy" id="388396"/>
    <lineage>
        <taxon>Bacteria</taxon>
        <taxon>Pseudomonadati</taxon>
        <taxon>Pseudomonadota</taxon>
        <taxon>Gammaproteobacteria</taxon>
        <taxon>Vibrionales</taxon>
        <taxon>Vibrionaceae</taxon>
        <taxon>Aliivibrio</taxon>
    </lineage>
</organism>
<keyword id="KW-0963">Cytoplasm</keyword>
<keyword id="KW-0275">Fatty acid biosynthesis</keyword>
<keyword id="KW-0276">Fatty acid metabolism</keyword>
<keyword id="KW-0413">Isomerase</keyword>
<keyword id="KW-0444">Lipid biosynthesis</keyword>
<keyword id="KW-0443">Lipid metabolism</keyword>
<keyword id="KW-0456">Lyase</keyword>
<protein>
    <recommendedName>
        <fullName evidence="1">3-hydroxydecanoyl-[acyl-carrier-protein] dehydratase</fullName>
        <ecNumber evidence="1">4.2.1.59</ecNumber>
    </recommendedName>
    <alternativeName>
        <fullName evidence="1">3-hydroxyacyl-[acyl-carrier-protein] dehydratase FabA</fullName>
    </alternativeName>
    <alternativeName>
        <fullName evidence="1">Beta-hydroxydecanoyl thioester dehydrase</fullName>
    </alternativeName>
    <alternativeName>
        <fullName evidence="1">Trans-2-decenoyl-[acyl-carrier-protein] isomerase</fullName>
        <ecNumber evidence="1">5.3.3.14</ecNumber>
    </alternativeName>
</protein>
<accession>B5FE24</accession>
<evidence type="ECO:0000255" key="1">
    <source>
        <dbReference type="HAMAP-Rule" id="MF_00405"/>
    </source>
</evidence>
<comment type="function">
    <text evidence="1">Necessary for the introduction of cis unsaturation into fatty acids. Catalyzes the dehydration of (3R)-3-hydroxydecanoyl-ACP to E-(2)-decenoyl-ACP and then its isomerization to Z-(3)-decenoyl-ACP. Can catalyze the dehydratase reaction for beta-hydroxyacyl-ACPs with saturated chain lengths up to 16:0, being most active on intermediate chain length.</text>
</comment>
<comment type="catalytic activity">
    <reaction evidence="1">
        <text>a (3R)-hydroxyacyl-[ACP] = a (2E)-enoyl-[ACP] + H2O</text>
        <dbReference type="Rhea" id="RHEA:13097"/>
        <dbReference type="Rhea" id="RHEA-COMP:9925"/>
        <dbReference type="Rhea" id="RHEA-COMP:9945"/>
        <dbReference type="ChEBI" id="CHEBI:15377"/>
        <dbReference type="ChEBI" id="CHEBI:78784"/>
        <dbReference type="ChEBI" id="CHEBI:78827"/>
        <dbReference type="EC" id="4.2.1.59"/>
    </reaction>
</comment>
<comment type="catalytic activity">
    <reaction evidence="1">
        <text>(3R)-hydroxydecanoyl-[ACP] = (2E)-decenoyl-[ACP] + H2O</text>
        <dbReference type="Rhea" id="RHEA:41860"/>
        <dbReference type="Rhea" id="RHEA-COMP:9638"/>
        <dbReference type="Rhea" id="RHEA-COMP:9639"/>
        <dbReference type="ChEBI" id="CHEBI:15377"/>
        <dbReference type="ChEBI" id="CHEBI:78466"/>
        <dbReference type="ChEBI" id="CHEBI:78467"/>
    </reaction>
</comment>
<comment type="catalytic activity">
    <reaction evidence="1">
        <text>(2E)-decenoyl-[ACP] = (3Z)-decenoyl-[ACP]</text>
        <dbReference type="Rhea" id="RHEA:23568"/>
        <dbReference type="Rhea" id="RHEA-COMP:9639"/>
        <dbReference type="Rhea" id="RHEA-COMP:9927"/>
        <dbReference type="ChEBI" id="CHEBI:78467"/>
        <dbReference type="ChEBI" id="CHEBI:78798"/>
        <dbReference type="EC" id="5.3.3.14"/>
    </reaction>
</comment>
<comment type="pathway">
    <text evidence="1">Lipid metabolism; fatty acid biosynthesis.</text>
</comment>
<comment type="subunit">
    <text evidence="1">Homodimer.</text>
</comment>
<comment type="subcellular location">
    <subcellularLocation>
        <location evidence="1">Cytoplasm</location>
    </subcellularLocation>
</comment>
<comment type="similarity">
    <text evidence="1">Belongs to the thioester dehydratase family. FabA subfamily.</text>
</comment>